<accession>P32609</accession>
<accession>D6VSV6</accession>
<accession>Q99229</accession>
<protein>
    <recommendedName>
        <fullName>Vacuolar segregation protein PEP7</fullName>
    </recommendedName>
    <alternativeName>
        <fullName>Carboxypeptidase Y-deficient protein 7</fullName>
    </alternativeName>
    <alternativeName>
        <fullName>Protein VAC1</fullName>
    </alternativeName>
    <alternativeName>
        <fullName>Vacuolar protein sorting-associated protein 19</fullName>
    </alternativeName>
    <alternativeName>
        <fullName>Vacuolar protein-targeting protein 19</fullName>
    </alternativeName>
</protein>
<proteinExistence type="evidence at protein level"/>
<gene>
    <name type="primary">PEP7</name>
    <name type="synonym">VAC1</name>
    <name type="synonym">VPL21</name>
    <name type="synonym">VPS19</name>
    <name type="synonym">VPT19</name>
    <name type="ordered locus">YDR323C</name>
</gene>
<feature type="chain" id="PRO_0000046858" description="Vacuolar segregation protein PEP7">
    <location>
        <begin position="1"/>
        <end position="515"/>
    </location>
</feature>
<feature type="zinc finger region" description="C2H2-type">
    <location>
        <begin position="6"/>
        <end position="29"/>
    </location>
</feature>
<feature type="zinc finger region" description="FYVE-type 1; atypical" evidence="1">
    <location>
        <begin position="72"/>
        <end position="137"/>
    </location>
</feature>
<feature type="zinc finger region" description="FYVE-type 2" evidence="1">
    <location>
        <begin position="215"/>
        <end position="297"/>
    </location>
</feature>
<feature type="region of interest" description="Disordered" evidence="2">
    <location>
        <begin position="36"/>
        <end position="58"/>
    </location>
</feature>
<feature type="binding site" evidence="1">
    <location>
        <position position="78"/>
    </location>
    <ligand>
        <name>Zn(2+)</name>
        <dbReference type="ChEBI" id="CHEBI:29105"/>
        <label>1</label>
    </ligand>
</feature>
<feature type="binding site" evidence="1">
    <location>
        <position position="81"/>
    </location>
    <ligand>
        <name>Zn(2+)</name>
        <dbReference type="ChEBI" id="CHEBI:29105"/>
        <label>1</label>
    </ligand>
</feature>
<feature type="binding site" evidence="1">
    <location>
        <position position="94"/>
    </location>
    <ligand>
        <name>Zn(2+)</name>
        <dbReference type="ChEBI" id="CHEBI:29105"/>
        <label>2</label>
    </ligand>
</feature>
<feature type="binding site" evidence="1">
    <location>
        <position position="97"/>
    </location>
    <ligand>
        <name>Zn(2+)</name>
        <dbReference type="ChEBI" id="CHEBI:29105"/>
        <label>2</label>
    </ligand>
</feature>
<feature type="binding site" evidence="1">
    <location>
        <position position="102"/>
    </location>
    <ligand>
        <name>Zn(2+)</name>
        <dbReference type="ChEBI" id="CHEBI:29105"/>
        <label>1</label>
    </ligand>
</feature>
<feature type="binding site" evidence="1">
    <location>
        <position position="105"/>
    </location>
    <ligand>
        <name>Zn(2+)</name>
        <dbReference type="ChEBI" id="CHEBI:29105"/>
        <label>1</label>
    </ligand>
</feature>
<feature type="binding site" evidence="1">
    <location>
        <position position="129"/>
    </location>
    <ligand>
        <name>Zn(2+)</name>
        <dbReference type="ChEBI" id="CHEBI:29105"/>
        <label>2</label>
    </ligand>
</feature>
<feature type="binding site" evidence="1">
    <location>
        <position position="132"/>
    </location>
    <ligand>
        <name>Zn(2+)</name>
        <dbReference type="ChEBI" id="CHEBI:29105"/>
        <label>2</label>
    </ligand>
</feature>
<feature type="binding site" evidence="1">
    <location>
        <position position="221"/>
    </location>
    <ligand>
        <name>Zn(2+)</name>
        <dbReference type="ChEBI" id="CHEBI:29105"/>
        <label>3</label>
    </ligand>
</feature>
<feature type="binding site" evidence="1">
    <location>
        <position position="224"/>
    </location>
    <ligand>
        <name>Zn(2+)</name>
        <dbReference type="ChEBI" id="CHEBI:29105"/>
        <label>3</label>
    </ligand>
</feature>
<feature type="binding site" evidence="1">
    <location>
        <position position="237"/>
    </location>
    <ligand>
        <name>Zn(2+)</name>
        <dbReference type="ChEBI" id="CHEBI:29105"/>
        <label>4</label>
    </ligand>
</feature>
<feature type="binding site" evidence="1">
    <location>
        <position position="240"/>
    </location>
    <ligand>
        <name>Zn(2+)</name>
        <dbReference type="ChEBI" id="CHEBI:29105"/>
        <label>4</label>
    </ligand>
</feature>
<feature type="binding site" evidence="1">
    <location>
        <position position="245"/>
    </location>
    <ligand>
        <name>Zn(2+)</name>
        <dbReference type="ChEBI" id="CHEBI:29105"/>
        <label>3</label>
    </ligand>
</feature>
<feature type="binding site" evidence="1">
    <location>
        <position position="252"/>
    </location>
    <ligand>
        <name>Zn(2+)</name>
        <dbReference type="ChEBI" id="CHEBI:29105"/>
        <label>3</label>
    </ligand>
</feature>
<feature type="binding site" evidence="1">
    <location>
        <position position="289"/>
    </location>
    <ligand>
        <name>Zn(2+)</name>
        <dbReference type="ChEBI" id="CHEBI:29105"/>
        <label>4</label>
    </ligand>
</feature>
<feature type="binding site" evidence="1">
    <location>
        <position position="292"/>
    </location>
    <ligand>
        <name>Zn(2+)</name>
        <dbReference type="ChEBI" id="CHEBI:29105"/>
        <label>4</label>
    </ligand>
</feature>
<feature type="sequence conflict" description="In Ref. 1; AAA35203." evidence="8" ref="1">
    <original>H</original>
    <variation>Y</variation>
    <location>
        <position position="366"/>
    </location>
</feature>
<evidence type="ECO:0000255" key="1">
    <source>
        <dbReference type="PROSITE-ProRule" id="PRU00091"/>
    </source>
</evidence>
<evidence type="ECO:0000256" key="2">
    <source>
        <dbReference type="SAM" id="MobiDB-lite"/>
    </source>
</evidence>
<evidence type="ECO:0000269" key="3">
    <source>
    </source>
</evidence>
<evidence type="ECO:0000269" key="4">
    <source>
    </source>
</evidence>
<evidence type="ECO:0000269" key="5">
    <source>
    </source>
</evidence>
<evidence type="ECO:0000269" key="6">
    <source>
    </source>
</evidence>
<evidence type="ECO:0000269" key="7">
    <source>
    </source>
</evidence>
<evidence type="ECO:0000305" key="8"/>
<comment type="function">
    <text evidence="6 7">Required for vacuole segregation and vacuole protein sorting. Possibly part of a complex which tethers the vacuole membrane to microtubules, either directly or via kinesin or dynein-like motor proteins. Probably functions in several interorganelle traffic pathways.</text>
</comment>
<comment type="subunit">
    <text evidence="3 4">Interacts with VPS21, VPS45, PEP3 and PEP5.</text>
</comment>
<comment type="interaction">
    <interactant intactId="EBI-20208">
        <id>P32609</id>
    </interactant>
    <interactant intactId="EBI-20444">
        <id>P38932</id>
        <label>VPS45</label>
    </interactant>
    <organismsDiffer>false</organismsDiffer>
    <experiments>4</experiments>
</comment>
<comment type="subcellular location">
    <subcellularLocation>
        <location evidence="3">Vacuole membrane</location>
        <topology evidence="3">Peripheral membrane protein</topology>
        <orientation evidence="3">Cytoplasmic side</orientation>
    </subcellularLocation>
</comment>
<comment type="miscellaneous">
    <text evidence="5">Present with 768 molecules/cell in log phase SD medium.</text>
</comment>
<name>PEP7_YEAST</name>
<keyword id="KW-0472">Membrane</keyword>
<keyword id="KW-0479">Metal-binding</keyword>
<keyword id="KW-1185">Reference proteome</keyword>
<keyword id="KW-0677">Repeat</keyword>
<keyword id="KW-0926">Vacuole</keyword>
<keyword id="KW-0862">Zinc</keyword>
<keyword id="KW-0863">Zinc-finger</keyword>
<reference key="1">
    <citation type="journal article" date="1992" name="J. Biol. Chem.">
        <title>Molecular characterization of VAC1, a gene required for vacuole inheritance and vacuole protein sorting.</title>
        <authorList>
            <person name="Weisman L.S."/>
            <person name="Wickner W."/>
        </authorList>
    </citation>
    <scope>NUCLEOTIDE SEQUENCE [GENOMIC DNA]</scope>
    <scope>FUNCTION</scope>
    <source>
        <strain>LWY148</strain>
    </source>
</reference>
<reference key="2">
    <citation type="journal article" date="1997" name="Mol. Biol. Cell">
        <title>Pep7p provides a novel protein that functions in vesicle-mediated transport between the yeast Golgi and endosome.</title>
        <authorList>
            <person name="Webb G.C."/>
            <person name="Zhang J."/>
            <person name="Garlow S.J."/>
            <person name="Wesp A."/>
            <person name="Riezman H."/>
            <person name="Jones E.W."/>
        </authorList>
    </citation>
    <scope>NUCLEOTIDE SEQUENCE [GENOMIC DNA]</scope>
    <scope>FUNCTION</scope>
    <source>
        <strain>ATCC 204508 / S288c</strain>
    </source>
</reference>
<reference key="3">
    <citation type="journal article" date="1997" name="Nature">
        <title>The nucleotide sequence of Saccharomyces cerevisiae chromosome IV.</title>
        <authorList>
            <person name="Jacq C."/>
            <person name="Alt-Moerbe J."/>
            <person name="Andre B."/>
            <person name="Arnold W."/>
            <person name="Bahr A."/>
            <person name="Ballesta J.P.G."/>
            <person name="Bargues M."/>
            <person name="Baron L."/>
            <person name="Becker A."/>
            <person name="Biteau N."/>
            <person name="Bloecker H."/>
            <person name="Blugeon C."/>
            <person name="Boskovic J."/>
            <person name="Brandt P."/>
            <person name="Brueckner M."/>
            <person name="Buitrago M.J."/>
            <person name="Coster F."/>
            <person name="Delaveau T."/>
            <person name="del Rey F."/>
            <person name="Dujon B."/>
            <person name="Eide L.G."/>
            <person name="Garcia-Cantalejo J.M."/>
            <person name="Goffeau A."/>
            <person name="Gomez-Peris A."/>
            <person name="Granotier C."/>
            <person name="Hanemann V."/>
            <person name="Hankeln T."/>
            <person name="Hoheisel J.D."/>
            <person name="Jaeger W."/>
            <person name="Jimenez A."/>
            <person name="Jonniaux J.-L."/>
            <person name="Kraemer C."/>
            <person name="Kuester H."/>
            <person name="Laamanen P."/>
            <person name="Legros Y."/>
            <person name="Louis E.J."/>
            <person name="Moeller-Rieker S."/>
            <person name="Monnet A."/>
            <person name="Moro M."/>
            <person name="Mueller-Auer S."/>
            <person name="Nussbaumer B."/>
            <person name="Paricio N."/>
            <person name="Paulin L."/>
            <person name="Perea J."/>
            <person name="Perez-Alonso M."/>
            <person name="Perez-Ortin J.E."/>
            <person name="Pohl T.M."/>
            <person name="Prydz H."/>
            <person name="Purnelle B."/>
            <person name="Rasmussen S.W."/>
            <person name="Remacha M.A."/>
            <person name="Revuelta J.L."/>
            <person name="Rieger M."/>
            <person name="Salom D."/>
            <person name="Saluz H.P."/>
            <person name="Saiz J.E."/>
            <person name="Saren A.-M."/>
            <person name="Schaefer M."/>
            <person name="Scharfe M."/>
            <person name="Schmidt E.R."/>
            <person name="Schneider C."/>
            <person name="Scholler P."/>
            <person name="Schwarz S."/>
            <person name="Soler-Mira A."/>
            <person name="Urrestarazu L.A."/>
            <person name="Verhasselt P."/>
            <person name="Vissers S."/>
            <person name="Voet M."/>
            <person name="Volckaert G."/>
            <person name="Wagner G."/>
            <person name="Wambutt R."/>
            <person name="Wedler E."/>
            <person name="Wedler H."/>
            <person name="Woelfl S."/>
            <person name="Harris D.E."/>
            <person name="Bowman S."/>
            <person name="Brown D."/>
            <person name="Churcher C.M."/>
            <person name="Connor R."/>
            <person name="Dedman K."/>
            <person name="Gentles S."/>
            <person name="Hamlin N."/>
            <person name="Hunt S."/>
            <person name="Jones L."/>
            <person name="McDonald S."/>
            <person name="Murphy L.D."/>
            <person name="Niblett D."/>
            <person name="Odell C."/>
            <person name="Oliver K."/>
            <person name="Rajandream M.A."/>
            <person name="Richards C."/>
            <person name="Shore L."/>
            <person name="Walsh S.V."/>
            <person name="Barrell B.G."/>
            <person name="Dietrich F.S."/>
            <person name="Mulligan J.T."/>
            <person name="Allen E."/>
            <person name="Araujo R."/>
            <person name="Aviles E."/>
            <person name="Berno A."/>
            <person name="Carpenter J."/>
            <person name="Chen E."/>
            <person name="Cherry J.M."/>
            <person name="Chung E."/>
            <person name="Duncan M."/>
            <person name="Hunicke-Smith S."/>
            <person name="Hyman R.W."/>
            <person name="Komp C."/>
            <person name="Lashkari D."/>
            <person name="Lew H."/>
            <person name="Lin D."/>
            <person name="Mosedale D."/>
            <person name="Nakahara K."/>
            <person name="Namath A."/>
            <person name="Oefner P."/>
            <person name="Oh C."/>
            <person name="Petel F.X."/>
            <person name="Roberts D."/>
            <person name="Schramm S."/>
            <person name="Schroeder M."/>
            <person name="Shogren T."/>
            <person name="Shroff N."/>
            <person name="Winant A."/>
            <person name="Yelton M.A."/>
            <person name="Botstein D."/>
            <person name="Davis R.W."/>
            <person name="Johnston M."/>
            <person name="Andrews S."/>
            <person name="Brinkman R."/>
            <person name="Cooper J."/>
            <person name="Ding H."/>
            <person name="Du Z."/>
            <person name="Favello A."/>
            <person name="Fulton L."/>
            <person name="Gattung S."/>
            <person name="Greco T."/>
            <person name="Hallsworth K."/>
            <person name="Hawkins J."/>
            <person name="Hillier L.W."/>
            <person name="Jier M."/>
            <person name="Johnson D."/>
            <person name="Johnston L."/>
            <person name="Kirsten J."/>
            <person name="Kucaba T."/>
            <person name="Langston Y."/>
            <person name="Latreille P."/>
            <person name="Le T."/>
            <person name="Mardis E."/>
            <person name="Menezes S."/>
            <person name="Miller N."/>
            <person name="Nhan M."/>
            <person name="Pauley A."/>
            <person name="Peluso D."/>
            <person name="Rifkin L."/>
            <person name="Riles L."/>
            <person name="Taich A."/>
            <person name="Trevaskis E."/>
            <person name="Vignati D."/>
            <person name="Wilcox L."/>
            <person name="Wohldman P."/>
            <person name="Vaudin M."/>
            <person name="Wilson R."/>
            <person name="Waterston R."/>
            <person name="Albermann K."/>
            <person name="Hani J."/>
            <person name="Heumann K."/>
            <person name="Kleine K."/>
            <person name="Mewes H.-W."/>
            <person name="Zollner A."/>
            <person name="Zaccaria P."/>
        </authorList>
    </citation>
    <scope>NUCLEOTIDE SEQUENCE [LARGE SCALE GENOMIC DNA]</scope>
    <source>
        <strain>ATCC 204508 / S288c</strain>
    </source>
</reference>
<reference key="4">
    <citation type="journal article" date="2014" name="G3 (Bethesda)">
        <title>The reference genome sequence of Saccharomyces cerevisiae: Then and now.</title>
        <authorList>
            <person name="Engel S.R."/>
            <person name="Dietrich F.S."/>
            <person name="Fisk D.G."/>
            <person name="Binkley G."/>
            <person name="Balakrishnan R."/>
            <person name="Costanzo M.C."/>
            <person name="Dwight S.S."/>
            <person name="Hitz B.C."/>
            <person name="Karra K."/>
            <person name="Nash R.S."/>
            <person name="Weng S."/>
            <person name="Wong E.D."/>
            <person name="Lloyd P."/>
            <person name="Skrzypek M.S."/>
            <person name="Miyasato S.R."/>
            <person name="Simison M."/>
            <person name="Cherry J.M."/>
        </authorList>
    </citation>
    <scope>GENOME REANNOTATION</scope>
    <source>
        <strain>ATCC 204508 / S288c</strain>
    </source>
</reference>
<reference key="5">
    <citation type="journal article" date="1999" name="Mol. Biol. Cell">
        <title>The phosphatidylinositol 3-phosphate binding protein Vac1p interacts with a Rab GTPase and a Sec1p homologue to facilitate vesicle-mediated vacuolar protein sorting.</title>
        <authorList>
            <person name="Tall G.G."/>
            <person name="Hama H."/>
            <person name="DeWald D.B."/>
            <person name="Horazdovsky B.F."/>
        </authorList>
    </citation>
    <scope>INTERACTION WITH VPS21 AND VPS45</scope>
    <scope>SUBCELLULAR LOCATION</scope>
</reference>
<reference key="6">
    <citation type="journal article" date="2000" name="Genetics">
        <title>Pep3p/Pep5p complex: a putative docking factor at multiple steps of vesicular transport to the vacuole of Saccharomyces cerevisiae.</title>
        <authorList>
            <person name="Srivastava A."/>
            <person name="Woolford C.A."/>
            <person name="Jones E.W."/>
        </authorList>
    </citation>
    <scope>INTERACTION WITH PEP3 AND PEP5</scope>
</reference>
<reference key="7">
    <citation type="journal article" date="2003" name="Nature">
        <title>Global analysis of protein expression in yeast.</title>
        <authorList>
            <person name="Ghaemmaghami S."/>
            <person name="Huh W.-K."/>
            <person name="Bower K."/>
            <person name="Howson R.W."/>
            <person name="Belle A."/>
            <person name="Dephoure N."/>
            <person name="O'Shea E.K."/>
            <person name="Weissman J.S."/>
        </authorList>
    </citation>
    <scope>LEVEL OF PROTEIN EXPRESSION [LARGE SCALE ANALYSIS]</scope>
</reference>
<dbReference type="EMBL" id="M80596">
    <property type="protein sequence ID" value="AAA35203.1"/>
    <property type="molecule type" value="Genomic_DNA"/>
</dbReference>
<dbReference type="EMBL" id="U22070">
    <property type="protein sequence ID" value="AAB60290.1"/>
    <property type="molecule type" value="Genomic_DNA"/>
</dbReference>
<dbReference type="EMBL" id="U32517">
    <property type="protein sequence ID" value="AAB64759.1"/>
    <property type="molecule type" value="Genomic_DNA"/>
</dbReference>
<dbReference type="EMBL" id="BK006938">
    <property type="protein sequence ID" value="DAA12166.1"/>
    <property type="molecule type" value="Genomic_DNA"/>
</dbReference>
<dbReference type="PIR" id="S59811">
    <property type="entry name" value="S59811"/>
</dbReference>
<dbReference type="RefSeq" id="NP_010610.3">
    <property type="nucleotide sequence ID" value="NM_001180631.3"/>
</dbReference>
<dbReference type="SMR" id="P32609"/>
<dbReference type="BioGRID" id="32381">
    <property type="interactions" value="156"/>
</dbReference>
<dbReference type="DIP" id="DIP-5240N"/>
<dbReference type="FunCoup" id="P32609">
    <property type="interactions" value="115"/>
</dbReference>
<dbReference type="IntAct" id="P32609">
    <property type="interactions" value="6"/>
</dbReference>
<dbReference type="STRING" id="4932.YDR323C"/>
<dbReference type="iPTMnet" id="P32609"/>
<dbReference type="PaxDb" id="4932-YDR323C"/>
<dbReference type="PeptideAtlas" id="P32609"/>
<dbReference type="EnsemblFungi" id="YDR323C_mRNA">
    <property type="protein sequence ID" value="YDR323C"/>
    <property type="gene ID" value="YDR323C"/>
</dbReference>
<dbReference type="GeneID" id="851923"/>
<dbReference type="KEGG" id="sce:YDR323C"/>
<dbReference type="AGR" id="SGD:S000002731"/>
<dbReference type="SGD" id="S000002731">
    <property type="gene designation" value="PEP7"/>
</dbReference>
<dbReference type="VEuPathDB" id="FungiDB:YDR323C"/>
<dbReference type="eggNOG" id="KOG1842">
    <property type="taxonomic scope" value="Eukaryota"/>
</dbReference>
<dbReference type="HOGENOM" id="CLU_026440_0_0_1"/>
<dbReference type="InParanoid" id="P32609"/>
<dbReference type="OMA" id="RKCGKLY"/>
<dbReference type="OrthoDB" id="166134at2759"/>
<dbReference type="BioCyc" id="YEAST:G3O-29880-MONOMER"/>
<dbReference type="Reactome" id="R-SCE-983231">
    <property type="pathway name" value="Factors involved in megakaryocyte development and platelet production"/>
</dbReference>
<dbReference type="BioGRID-ORCS" id="851923">
    <property type="hits" value="1 hit in 10 CRISPR screens"/>
</dbReference>
<dbReference type="PRO" id="PR:P32609"/>
<dbReference type="Proteomes" id="UP000002311">
    <property type="component" value="Chromosome IV"/>
</dbReference>
<dbReference type="RNAct" id="P32609">
    <property type="molecule type" value="protein"/>
</dbReference>
<dbReference type="GO" id="GO:0005737">
    <property type="term" value="C:cytoplasm"/>
    <property type="evidence" value="ECO:0000314"/>
    <property type="project" value="SGD"/>
</dbReference>
<dbReference type="GO" id="GO:0010009">
    <property type="term" value="C:cytoplasmic side of endosome membrane"/>
    <property type="evidence" value="ECO:0000314"/>
    <property type="project" value="SGD"/>
</dbReference>
<dbReference type="GO" id="GO:0005829">
    <property type="term" value="C:cytosol"/>
    <property type="evidence" value="ECO:0007669"/>
    <property type="project" value="GOC"/>
</dbReference>
<dbReference type="GO" id="GO:0005634">
    <property type="term" value="C:nucleus"/>
    <property type="evidence" value="ECO:0007005"/>
    <property type="project" value="SGD"/>
</dbReference>
<dbReference type="GO" id="GO:0005774">
    <property type="term" value="C:vacuolar membrane"/>
    <property type="evidence" value="ECO:0007669"/>
    <property type="project" value="UniProtKB-SubCell"/>
</dbReference>
<dbReference type="GO" id="GO:0032266">
    <property type="term" value="F:phosphatidylinositol-3-phosphate binding"/>
    <property type="evidence" value="ECO:0000314"/>
    <property type="project" value="SGD"/>
</dbReference>
<dbReference type="GO" id="GO:0008270">
    <property type="term" value="F:zinc ion binding"/>
    <property type="evidence" value="ECO:0007669"/>
    <property type="project" value="UniProtKB-KW"/>
</dbReference>
<dbReference type="GO" id="GO:0006895">
    <property type="term" value="P:Golgi to endosome transport"/>
    <property type="evidence" value="ECO:0000315"/>
    <property type="project" value="SGD"/>
</dbReference>
<dbReference type="GO" id="GO:0006896">
    <property type="term" value="P:Golgi to vacuole transport"/>
    <property type="evidence" value="ECO:0000353"/>
    <property type="project" value="SGD"/>
</dbReference>
<dbReference type="GO" id="GO:0000011">
    <property type="term" value="P:vacuole inheritance"/>
    <property type="evidence" value="ECO:0000315"/>
    <property type="project" value="SGD"/>
</dbReference>
<dbReference type="GO" id="GO:0006904">
    <property type="term" value="P:vesicle docking involved in exocytosis"/>
    <property type="evidence" value="ECO:0000315"/>
    <property type="project" value="SGD"/>
</dbReference>
<dbReference type="GO" id="GO:0006906">
    <property type="term" value="P:vesicle fusion"/>
    <property type="evidence" value="ECO:0000315"/>
    <property type="project" value="SGD"/>
</dbReference>
<dbReference type="CDD" id="cd15761">
    <property type="entry name" value="FYVE1_Vac1p_like"/>
    <property type="match status" value="1"/>
</dbReference>
<dbReference type="CDD" id="cd15737">
    <property type="entry name" value="FYVE2_Vac1p_like"/>
    <property type="match status" value="1"/>
</dbReference>
<dbReference type="Gene3D" id="3.30.40.10">
    <property type="entry name" value="Zinc/RING finger domain, C3HC4 (zinc finger)"/>
    <property type="match status" value="2"/>
</dbReference>
<dbReference type="InterPro" id="IPR052727">
    <property type="entry name" value="Rab4/Rab5_effector"/>
</dbReference>
<dbReference type="InterPro" id="IPR021565">
    <property type="entry name" value="Rbsn_Rab-bd"/>
</dbReference>
<dbReference type="InterPro" id="IPR036531">
    <property type="entry name" value="Rbsn_Rab-bd_sf"/>
</dbReference>
<dbReference type="InterPro" id="IPR013087">
    <property type="entry name" value="Znf_C2H2_type"/>
</dbReference>
<dbReference type="InterPro" id="IPR000306">
    <property type="entry name" value="Znf_FYVE"/>
</dbReference>
<dbReference type="InterPro" id="IPR017455">
    <property type="entry name" value="Znf_FYVE-rel"/>
</dbReference>
<dbReference type="InterPro" id="IPR011011">
    <property type="entry name" value="Znf_FYVE_PHD"/>
</dbReference>
<dbReference type="InterPro" id="IPR013083">
    <property type="entry name" value="Znf_RING/FYVE/PHD"/>
</dbReference>
<dbReference type="PANTHER" id="PTHR13510">
    <property type="entry name" value="FYVE-FINGER-CONTAINING RAB5 EFFECTOR PROTEIN RABENOSYN-5-RELATED"/>
    <property type="match status" value="1"/>
</dbReference>
<dbReference type="PANTHER" id="PTHR13510:SF44">
    <property type="entry name" value="RABENOSYN-5"/>
    <property type="match status" value="1"/>
</dbReference>
<dbReference type="Pfam" id="PF01363">
    <property type="entry name" value="FYVE"/>
    <property type="match status" value="1"/>
</dbReference>
<dbReference type="Pfam" id="PF11464">
    <property type="entry name" value="Rbsn"/>
    <property type="match status" value="1"/>
</dbReference>
<dbReference type="SMART" id="SM00064">
    <property type="entry name" value="FYVE"/>
    <property type="match status" value="2"/>
</dbReference>
<dbReference type="SUPFAM" id="SSF57903">
    <property type="entry name" value="FYVE/PHD zinc finger"/>
    <property type="match status" value="2"/>
</dbReference>
<dbReference type="SUPFAM" id="SSF140125">
    <property type="entry name" value="Rabenosyn-5 Rab-binding domain-like"/>
    <property type="match status" value="1"/>
</dbReference>
<dbReference type="PROSITE" id="PS50178">
    <property type="entry name" value="ZF_FYVE"/>
    <property type="match status" value="2"/>
</dbReference>
<dbReference type="PROSITE" id="PS00028">
    <property type="entry name" value="ZINC_FINGER_C2H2_1"/>
    <property type="match status" value="1"/>
</dbReference>
<sequence length="515" mass="59443">MDLENVSCPICLRKFDNLQALNAHLDVEHGFNDNEDSLGSNDSRLVNGKQKKARSVDSSAQKLKRSHWEKFKKGKSCCHTCGRTLNNNIGAINCRKCGKLYCRRHLPNMIKLNLSAQYDPRNGKWYNCCHDCFVTKPGYNDYGEVIDLTPEFFKVRNIKREDKNLRLLQLENRFVRLVDGLITLYNTYSRSIIHNLKMNSEMSKLERTVTPWRDDRSVLFCNICSEPFGLLLRKHHCRLCGMVVCDDANRNCSNEISIGYLMSAASDLPFEYNIQKDDLLHIPISIRLCSHCIDMLFIGRKFNKDVRMPLSGIFAKYDSMQNISKVIDSLLPIFEDSLNSLKVETAKDSENTLDPKNLNDLARLRHKLLNSFNLYNTLTRQLLSVEPQSHLERQLQNSIKIASAAYINEKILPLKSLPAILNPEGHKTNEDGQKAEPEVKKLSQLMIENLTIKEVKELREELMVLKEQSYLIESTIQDYKKQRRLEEIVTLNKNLEELHSRIHTVQSKLGDHGFN</sequence>
<organism>
    <name type="scientific">Saccharomyces cerevisiae (strain ATCC 204508 / S288c)</name>
    <name type="common">Baker's yeast</name>
    <dbReference type="NCBI Taxonomy" id="559292"/>
    <lineage>
        <taxon>Eukaryota</taxon>
        <taxon>Fungi</taxon>
        <taxon>Dikarya</taxon>
        <taxon>Ascomycota</taxon>
        <taxon>Saccharomycotina</taxon>
        <taxon>Saccharomycetes</taxon>
        <taxon>Saccharomycetales</taxon>
        <taxon>Saccharomycetaceae</taxon>
        <taxon>Saccharomyces</taxon>
    </lineage>
</organism>